<protein>
    <recommendedName>
        <fullName>Adenine permease AdeP</fullName>
    </recommendedName>
</protein>
<organism>
    <name type="scientific">Escherichia coli (strain K12)</name>
    <dbReference type="NCBI Taxonomy" id="83333"/>
    <lineage>
        <taxon>Bacteria</taxon>
        <taxon>Pseudomonadati</taxon>
        <taxon>Pseudomonadota</taxon>
        <taxon>Gammaproteobacteria</taxon>
        <taxon>Enterobacterales</taxon>
        <taxon>Enterobacteriaceae</taxon>
        <taxon>Escherichia</taxon>
    </lineage>
</organism>
<name>ADEP_ECOLI</name>
<keyword id="KW-0997">Cell inner membrane</keyword>
<keyword id="KW-1003">Cell membrane</keyword>
<keyword id="KW-0472">Membrane</keyword>
<keyword id="KW-1185">Reference proteome</keyword>
<keyword id="KW-0812">Transmembrane</keyword>
<keyword id="KW-1133">Transmembrane helix</keyword>
<keyword id="KW-0813">Transport</keyword>
<reference key="1">
    <citation type="journal article" date="1993" name="Genomics">
        <title>DNA sequence and analysis of 136 kilobases of the Escherichia coli genome: organizational symmetry around the origin of replication.</title>
        <authorList>
            <person name="Burland V.D."/>
            <person name="Plunkett G. III"/>
            <person name="Daniels D.L."/>
            <person name="Blattner F.R."/>
        </authorList>
    </citation>
    <scope>NUCLEOTIDE SEQUENCE [LARGE SCALE GENOMIC DNA]</scope>
    <source>
        <strain>K12 / MG1655 / ATCC 47076</strain>
    </source>
</reference>
<reference key="2">
    <citation type="journal article" date="1997" name="Science">
        <title>The complete genome sequence of Escherichia coli K-12.</title>
        <authorList>
            <person name="Blattner F.R."/>
            <person name="Plunkett G. III"/>
            <person name="Bloch C.A."/>
            <person name="Perna N.T."/>
            <person name="Burland V."/>
            <person name="Riley M."/>
            <person name="Collado-Vides J."/>
            <person name="Glasner J.D."/>
            <person name="Rode C.K."/>
            <person name="Mayhew G.F."/>
            <person name="Gregor J."/>
            <person name="Davis N.W."/>
            <person name="Kirkpatrick H.A."/>
            <person name="Goeden M.A."/>
            <person name="Rose D.J."/>
            <person name="Mau B."/>
            <person name="Shao Y."/>
        </authorList>
    </citation>
    <scope>NUCLEOTIDE SEQUENCE [LARGE SCALE GENOMIC DNA]</scope>
    <source>
        <strain>K12 / MG1655 / ATCC 47076</strain>
    </source>
</reference>
<reference key="3">
    <citation type="journal article" date="2006" name="Mol. Syst. Biol.">
        <title>Highly accurate genome sequences of Escherichia coli K-12 strains MG1655 and W3110.</title>
        <authorList>
            <person name="Hayashi K."/>
            <person name="Morooka N."/>
            <person name="Yamamoto Y."/>
            <person name="Fujita K."/>
            <person name="Isono K."/>
            <person name="Choi S."/>
            <person name="Ohtsubo E."/>
            <person name="Baba T."/>
            <person name="Wanner B.L."/>
            <person name="Mori H."/>
            <person name="Horiuchi T."/>
        </authorList>
    </citation>
    <scope>NUCLEOTIDE SEQUENCE [LARGE SCALE GENOMIC DNA]</scope>
    <source>
        <strain>K12 / W3110 / ATCC 27325 / DSM 5911</strain>
    </source>
</reference>
<reference key="4">
    <citation type="journal article" date="1983" name="J. Gen. Microbiol.">
        <title>Transport of nucleic acid bases into Escherichia coli.</title>
        <authorList>
            <person name="Burton K."/>
        </authorList>
    </citation>
    <scope>FUNCTION</scope>
</reference>
<reference key="5">
    <citation type="journal article" date="1994" name="Proc. R. Soc. B">
        <title>Adenine transport in Escherichia coli.</title>
        <authorList>
            <person name="Burton K."/>
        </authorList>
    </citation>
    <scope>FUNCTION</scope>
    <scope>ACTIVITY REGULATION</scope>
</reference>
<reference key="6">
    <citation type="journal article" date="2005" name="Science">
        <title>Global topology analysis of the Escherichia coli inner membrane proteome.</title>
        <authorList>
            <person name="Daley D.O."/>
            <person name="Rapp M."/>
            <person name="Granseth E."/>
            <person name="Melen K."/>
            <person name="Drew D."/>
            <person name="von Heijne G."/>
        </authorList>
    </citation>
    <scope>SUBCELLULAR LOCATION [LARGE SCALE ANALYSIS]</scope>
    <source>
        <strain>K12 / MG1655 / ATCC 47076</strain>
    </source>
</reference>
<reference key="7">
    <citation type="journal article" date="2013" name="J. Biol. Chem.">
        <title>Functional identification of the hypoxanthine/guanine transporters YjcD and YgfQ and the adenine transporters PurP and YicO of Escherichia coli K-12.</title>
        <authorList>
            <person name="Papakostas K."/>
            <person name="Botou M."/>
            <person name="Frillingos S."/>
        </authorList>
    </citation>
    <scope>FUNCTION</scope>
    <scope>BIOPHYSICOCHEMICAL PROPERTIES</scope>
    <scope>SUBCELLULAR LOCATION</scope>
    <scope>TOPOLOGY</scope>
    <scope>GENE NAME</scope>
    <scope>MUTAGENESIS OF THR-38; ALA-91; ASP-267; THR-271; ASP-298; ILE-317; GLU-318 AND SER-319</scope>
    <source>
        <strain>K12</strain>
    </source>
</reference>
<comment type="function">
    <text evidence="3 4 5">High-affinity transporter for adenine.</text>
</comment>
<comment type="activity regulation">
    <text evidence="5">Internal adenine may inhibit transport.</text>
</comment>
<comment type="biophysicochemical properties">
    <kinetics>
        <KM evidence="3">1 uM for adenine</KM>
        <Vmax evidence="3">1.7 nmol/min/mg enzyme</Vmax>
    </kinetics>
</comment>
<comment type="subcellular location">
    <subcellularLocation>
        <location evidence="2 3">Cell inner membrane</location>
        <topology evidence="2 3">Multi-pass membrane protein</topology>
    </subcellularLocation>
</comment>
<comment type="similarity">
    <text evidence="6">Belongs to the nucleobase:cation symporter-2 (NCS2) (TC 2.A.40) family. Azg-like subfamily.</text>
</comment>
<feature type="chain" id="PRO_0000169638" description="Adenine permease AdeP">
    <location>
        <begin position="1"/>
        <end position="445"/>
    </location>
</feature>
<feature type="topological domain" description="Cytoplasmic" evidence="1">
    <location>
        <begin position="1"/>
        <end position="28"/>
    </location>
</feature>
<feature type="transmembrane region" description="Helical" evidence="1">
    <location>
        <begin position="29"/>
        <end position="52"/>
    </location>
</feature>
<feature type="topological domain" description="Periplasmic" evidence="1">
    <location>
        <begin position="53"/>
        <end position="62"/>
    </location>
</feature>
<feature type="transmembrane region" description="Helical" evidence="1">
    <location>
        <begin position="63"/>
        <end position="81"/>
    </location>
</feature>
<feature type="topological domain" description="Cytoplasmic" evidence="1">
    <location>
        <begin position="82"/>
        <end position="83"/>
    </location>
</feature>
<feature type="transmembrane region" description="Discontinuously helical" evidence="1">
    <location>
        <begin position="84"/>
        <end position="100"/>
    </location>
</feature>
<feature type="topological domain" description="Periplasmic" evidence="1">
    <location>
        <begin position="101"/>
        <end position="112"/>
    </location>
</feature>
<feature type="transmembrane region" description="Helical" evidence="1">
    <location>
        <begin position="113"/>
        <end position="132"/>
    </location>
</feature>
<feature type="topological domain" description="Cytoplasmic" evidence="1">
    <location>
        <begin position="133"/>
        <end position="144"/>
    </location>
</feature>
<feature type="transmembrane region" description="Helical" evidence="1">
    <location>
        <begin position="145"/>
        <end position="165"/>
    </location>
</feature>
<feature type="topological domain" description="Periplasmic" evidence="1">
    <location>
        <begin position="166"/>
        <end position="181"/>
    </location>
</feature>
<feature type="transmembrane region" description="Helical" evidence="1">
    <location>
        <begin position="182"/>
        <end position="199"/>
    </location>
</feature>
<feature type="topological domain" description="Cytoplasmic" evidence="1">
    <location>
        <begin position="200"/>
        <end position="203"/>
    </location>
</feature>
<feature type="transmembrane region" description="Helical" evidence="1">
    <location>
        <begin position="204"/>
        <end position="222"/>
    </location>
</feature>
<feature type="topological domain" description="Periplasmic" evidence="1">
    <location>
        <begin position="223"/>
        <end position="250"/>
    </location>
</feature>
<feature type="transmembrane region" description="Helical" evidence="1">
    <location>
        <begin position="251"/>
        <end position="279"/>
    </location>
</feature>
<feature type="topological domain" description="Cytoplasmic" evidence="1">
    <location>
        <begin position="280"/>
        <end position="292"/>
    </location>
</feature>
<feature type="transmembrane region" description="Helical" evidence="1">
    <location>
        <begin position="293"/>
        <end position="308"/>
    </location>
</feature>
<feature type="topological domain" description="Periplasmic" evidence="1">
    <location>
        <begin position="309"/>
        <end position="310"/>
    </location>
</feature>
<feature type="transmembrane region" description="Discontinuously helical" evidence="1">
    <location>
        <begin position="311"/>
        <end position="326"/>
    </location>
</feature>
<feature type="topological domain" description="Cytoplasmic" evidence="1">
    <location>
        <begin position="327"/>
        <end position="330"/>
    </location>
</feature>
<feature type="transmembrane region" description="Helical" evidence="1">
    <location>
        <begin position="331"/>
        <end position="345"/>
    </location>
</feature>
<feature type="topological domain" description="Periplasmic" evidence="1">
    <location>
        <begin position="346"/>
        <end position="356"/>
    </location>
</feature>
<feature type="transmembrane region" description="Helical" evidence="1">
    <location>
        <begin position="357"/>
        <end position="376"/>
    </location>
</feature>
<feature type="topological domain" description="Cytoplasmic" evidence="1">
    <location>
        <begin position="377"/>
        <end position="381"/>
    </location>
</feature>
<feature type="intramembrane region" description="Discontinuously helical" evidence="1">
    <location>
        <begin position="382"/>
        <end position="417"/>
    </location>
</feature>
<feature type="topological domain" description="Cytoplasmic" evidence="1">
    <location>
        <begin position="418"/>
        <end position="445"/>
    </location>
</feature>
<feature type="mutagenesis site" description="Almost no change in activity." evidence="3">
    <original>T</original>
    <variation>A</variation>
    <location>
        <position position="38"/>
    </location>
</feature>
<feature type="mutagenesis site" description="Lack of activity." evidence="3">
    <original>T</original>
    <variation>H</variation>
    <location>
        <position position="38"/>
    </location>
</feature>
<feature type="mutagenesis site" description="Almost no change in activity." evidence="3">
    <original>A</original>
    <variation>G</variation>
    <variation>S</variation>
    <location>
        <position position="91"/>
    </location>
</feature>
<feature type="mutagenesis site" description="Lack of activity." evidence="3">
    <original>D</original>
    <variation>A</variation>
    <variation>N</variation>
    <location>
        <position position="267"/>
    </location>
</feature>
<feature type="mutagenesis site" description="Strong decrease in activity." evidence="3">
    <original>D</original>
    <variation>E</variation>
    <location>
        <position position="267"/>
    </location>
</feature>
<feature type="mutagenesis site" description="Almost no change in activity." evidence="3">
    <original>T</original>
    <variation>A</variation>
    <variation>S</variation>
    <location>
        <position position="271"/>
    </location>
</feature>
<feature type="mutagenesis site" description="Lack of activity." evidence="3">
    <original>T</original>
    <variation>D</variation>
    <location>
        <position position="271"/>
    </location>
</feature>
<feature type="mutagenesis site" description="Strong decrease in activity." evidence="3">
    <original>T</original>
    <variation>N</variation>
    <location>
        <position position="271"/>
    </location>
</feature>
<feature type="mutagenesis site" description="Almost no change in activity." evidence="3">
    <original>D</original>
    <variation>E</variation>
    <location>
        <position position="298"/>
    </location>
</feature>
<feature type="mutagenesis site" description="Lack of activity." evidence="3">
    <original>D</original>
    <variation>N</variation>
    <location>
        <position position="298"/>
    </location>
</feature>
<feature type="mutagenesis site" description="Almost no change in activity." evidence="3">
    <original>I</original>
    <variation>A</variation>
    <location>
        <position position="317"/>
    </location>
</feature>
<feature type="mutagenesis site" description="Strong decrease in activity." evidence="3">
    <original>I</original>
    <variation>E</variation>
    <location>
        <position position="317"/>
    </location>
</feature>
<feature type="mutagenesis site" description="Strong decrease in activity." evidence="3">
    <original>E</original>
    <variation>D</variation>
    <location>
        <position position="318"/>
    </location>
</feature>
<feature type="mutagenesis site" description="Lack of activity." evidence="3">
    <original>E</original>
    <variation>Q</variation>
    <location>
        <position position="318"/>
    </location>
</feature>
<feature type="mutagenesis site" description="Almost no change in activity." evidence="3">
    <original>S</original>
    <variation>A</variation>
    <variation>N</variation>
    <location>
        <position position="319"/>
    </location>
</feature>
<gene>
    <name type="primary">adeP</name>
    <name type="synonym">purP</name>
    <name type="synonym">yieG</name>
    <name type="ordered locus">b3714</name>
    <name type="ordered locus">JW3692</name>
</gene>
<sequence>MSHQHTTQTSGQGMLERVFKLREHGTTARTEVIAGFTTFLTMVYIVFVNPQILGVAGMDTSAVFVTTCLIAAFGSIMMGLFANLPVALAPAMGLNAFFAFVVVQAMGLPWQVGMGAIFWGAIGLLLLTIFRVRYWMIANIPVSLRVGITSGIGLFIGMMGLKNAGVIVANPETLVSIGNLTSHSVLLGILGFFIIAILASRNIHAAVLVSIVVTTLLGWMLGDVHYNGIVSAPPSVMTVVGHVDLAGSFNLGLAGVIFSFMLVNLFDSSGTLIGVTDKAGLADEKGKFPRMKQALYVDSISSVTGSFIGTSSVTAYIESSSGVSVGGRTGLTAVVVGLLFLLVIFLSPLAGMVPGYAAAGALIYVGVLMTSSLARVNWQDLTESVPAFITAVMMPFSFSITEGIALGFISYCVMKIGTGRLRDLSPCVIIVALLFILKIVFIDAH</sequence>
<evidence type="ECO:0000255" key="1"/>
<evidence type="ECO:0000269" key="2">
    <source>
    </source>
</evidence>
<evidence type="ECO:0000269" key="3">
    <source>
    </source>
</evidence>
<evidence type="ECO:0000269" key="4">
    <source>
    </source>
</evidence>
<evidence type="ECO:0000269" key="5">
    <source>
    </source>
</evidence>
<evidence type="ECO:0000305" key="6"/>
<accession>P31466</accession>
<accession>P76741</accession>
<accession>Q2M832</accession>
<proteinExistence type="evidence at protein level"/>
<dbReference type="EMBL" id="L10328">
    <property type="protein sequence ID" value="AAA62065.1"/>
    <property type="molecule type" value="Genomic_DNA"/>
</dbReference>
<dbReference type="EMBL" id="U00096">
    <property type="protein sequence ID" value="AAC76737.1"/>
    <property type="molecule type" value="Genomic_DNA"/>
</dbReference>
<dbReference type="EMBL" id="AP009048">
    <property type="protein sequence ID" value="BAE77574.1"/>
    <property type="molecule type" value="Genomic_DNA"/>
</dbReference>
<dbReference type="PIR" id="C65174">
    <property type="entry name" value="C65174"/>
</dbReference>
<dbReference type="RefSeq" id="NP_418170.1">
    <property type="nucleotide sequence ID" value="NC_000913.3"/>
</dbReference>
<dbReference type="RefSeq" id="WP_000019348.1">
    <property type="nucleotide sequence ID" value="NZ_SSZK01000035.1"/>
</dbReference>
<dbReference type="SMR" id="P31466"/>
<dbReference type="BioGRID" id="4262172">
    <property type="interactions" value="283"/>
</dbReference>
<dbReference type="FunCoup" id="P31466">
    <property type="interactions" value="493"/>
</dbReference>
<dbReference type="STRING" id="511145.b3714"/>
<dbReference type="TCDB" id="2.A.40.7.6">
    <property type="family name" value="the nucleobase/ascorbate transporter (nat) or nucleobase:cation symporter-2 (ncs2) family"/>
</dbReference>
<dbReference type="jPOST" id="P31466"/>
<dbReference type="PaxDb" id="511145-b3714"/>
<dbReference type="DNASU" id="948224"/>
<dbReference type="EnsemblBacteria" id="AAC76737">
    <property type="protein sequence ID" value="AAC76737"/>
    <property type="gene ID" value="b3714"/>
</dbReference>
<dbReference type="GeneID" id="948224"/>
<dbReference type="KEGG" id="ecj:JW3692"/>
<dbReference type="KEGG" id="eco:b3714"/>
<dbReference type="KEGG" id="ecoc:C3026_20135"/>
<dbReference type="PATRIC" id="fig|1411691.4.peg.2987"/>
<dbReference type="EchoBASE" id="EB1675"/>
<dbReference type="eggNOG" id="COG2252">
    <property type="taxonomic scope" value="Bacteria"/>
</dbReference>
<dbReference type="HOGENOM" id="CLU_024508_0_1_6"/>
<dbReference type="InParanoid" id="P31466"/>
<dbReference type="OMA" id="RKGSYFF"/>
<dbReference type="OrthoDB" id="9808458at2"/>
<dbReference type="PhylomeDB" id="P31466"/>
<dbReference type="BioCyc" id="EcoCyc:EG11724-MONOMER"/>
<dbReference type="BioCyc" id="MetaCyc:EG11724-MONOMER"/>
<dbReference type="SABIO-RK" id="P31466"/>
<dbReference type="PRO" id="PR:P31466"/>
<dbReference type="Proteomes" id="UP000000625">
    <property type="component" value="Chromosome"/>
</dbReference>
<dbReference type="GO" id="GO:0005886">
    <property type="term" value="C:plasma membrane"/>
    <property type="evidence" value="ECO:0000314"/>
    <property type="project" value="EcoCyc"/>
</dbReference>
<dbReference type="GO" id="GO:0015207">
    <property type="term" value="F:adenine transmembrane transporter activity"/>
    <property type="evidence" value="ECO:0000314"/>
    <property type="project" value="EcoCyc"/>
</dbReference>
<dbReference type="GO" id="GO:0015295">
    <property type="term" value="F:solute:proton symporter activity"/>
    <property type="evidence" value="ECO:0000314"/>
    <property type="project" value="EcoCyc"/>
</dbReference>
<dbReference type="GO" id="GO:0015853">
    <property type="term" value="P:adenine transport"/>
    <property type="evidence" value="ECO:0000314"/>
    <property type="project" value="EcoCyc"/>
</dbReference>
<dbReference type="InterPro" id="IPR045018">
    <property type="entry name" value="Azg-like"/>
</dbReference>
<dbReference type="InterPro" id="IPR026033">
    <property type="entry name" value="Azg-like_bact_archaea"/>
</dbReference>
<dbReference type="InterPro" id="IPR006043">
    <property type="entry name" value="NCS2"/>
</dbReference>
<dbReference type="PANTHER" id="PTHR43337">
    <property type="entry name" value="XANTHINE/URACIL PERMEASE C887.17-RELATED"/>
    <property type="match status" value="1"/>
</dbReference>
<dbReference type="PANTHER" id="PTHR43337:SF1">
    <property type="entry name" value="XANTHINE_URACIL PERMEASE C887.17-RELATED"/>
    <property type="match status" value="1"/>
</dbReference>
<dbReference type="Pfam" id="PF00860">
    <property type="entry name" value="Xan_ur_permease"/>
    <property type="match status" value="1"/>
</dbReference>
<dbReference type="PIRSF" id="PIRSF005353">
    <property type="entry name" value="PbuG"/>
    <property type="match status" value="1"/>
</dbReference>